<proteinExistence type="evidence at transcript level"/>
<gene>
    <name type="primary">usp44</name>
</gene>
<reference key="1">
    <citation type="submission" date="2006-08" db="EMBL/GenBank/DDBJ databases">
        <authorList>
            <consortium name="NIH - Xenopus Gene Collection (XGC) project"/>
        </authorList>
    </citation>
    <scope>NUCLEOTIDE SEQUENCE [LARGE SCALE MRNA]</scope>
    <source>
        <strain>N6</strain>
        <tissue>Oviduct</tissue>
    </source>
</reference>
<name>UBP44_XENTR</name>
<sequence length="652" mass="74676">MDKCKHVGRLRLAQDHSILNPQKWHCVDCNTTESVWACLSCSHVACGRYIEEHALRHFQDSKHPLALEVNELYVFCYLCDDYVLNDNTTGDLKLLRSTLSAIKSQNYDCTTRSGRTLRSMVTADDSFISHEGAQAFLQNEDRAFTALWHRRHALLGKVFRSWFALTPKGKQRLEEERLREVAEQKREEARKRRQQLKRKLKEEMESTPPRKSSRLKQQMQPSPKTELPSVQKMNQKYTPTTKQKPPAPTSIEVCLKKIGNSPIKRKPTVTPGVTGLRNLGNTCYMNSILQILSHLHVFRECFLQLDLNQTQELLAAAGSGKTRLSSKYPPSAVLPKVTQKHTKVQRSLARRQSFSSGLSGGASNSRNMELIQPKEPSSKHISLCHELHTLFQVMWSGKWALVSPFAMLHSVWRLIPAFRGYAQQDAQEFLCELLDKVQQELETTGTRYPTLIPASQRKLIKQVLNIVNNIFHGQLLSQVTCLACDHKSNTIEPFWDLSLEFPERYHFNGKETASQRPCLLTEMLAKFTETEALEGKIYACDQCNTKRRKFSSKPVVLTEAQKQLMVCRLPQVLRLHLKRFRWSGRNHREKIGVHVRFDQMLNMEPYCCRESTAALRADCFIYDLSSVVMHHGKGFGSGHYTAFCYNPEGGNG</sequence>
<dbReference type="EC" id="3.4.19.12"/>
<dbReference type="EMBL" id="BC121579">
    <property type="protein sequence ID" value="AAI21580.1"/>
    <property type="molecule type" value="mRNA"/>
</dbReference>
<dbReference type="RefSeq" id="NP_001072389.1">
    <property type="nucleotide sequence ID" value="NM_001078921.1"/>
</dbReference>
<dbReference type="FunCoup" id="Q0V9G5">
    <property type="interactions" value="920"/>
</dbReference>
<dbReference type="STRING" id="8364.ENSXETP00000037408"/>
<dbReference type="PaxDb" id="8364-ENSXETP00000020288"/>
<dbReference type="DNASU" id="779843"/>
<dbReference type="GeneID" id="779843"/>
<dbReference type="KEGG" id="xtr:779843"/>
<dbReference type="AGR" id="Xenbase:XB-GENE-1014112"/>
<dbReference type="CTD" id="84101"/>
<dbReference type="Xenbase" id="XB-GENE-1014112">
    <property type="gene designation" value="usp44"/>
</dbReference>
<dbReference type="eggNOG" id="KOG1867">
    <property type="taxonomic scope" value="Eukaryota"/>
</dbReference>
<dbReference type="HOGENOM" id="CLU_008279_13_1_1"/>
<dbReference type="InParanoid" id="Q0V9G5"/>
<dbReference type="OrthoDB" id="21192at2759"/>
<dbReference type="Reactome" id="R-XTR-5689880">
    <property type="pathway name" value="Ub-specific processing proteases"/>
</dbReference>
<dbReference type="Proteomes" id="UP000008143">
    <property type="component" value="Chromosome 3"/>
</dbReference>
<dbReference type="GO" id="GO:0005634">
    <property type="term" value="C:nucleus"/>
    <property type="evidence" value="ECO:0000250"/>
    <property type="project" value="UniProtKB"/>
</dbReference>
<dbReference type="GO" id="GO:0004843">
    <property type="term" value="F:cysteine-type deubiquitinase activity"/>
    <property type="evidence" value="ECO:0000250"/>
    <property type="project" value="UniProtKB"/>
</dbReference>
<dbReference type="GO" id="GO:0008270">
    <property type="term" value="F:zinc ion binding"/>
    <property type="evidence" value="ECO:0007669"/>
    <property type="project" value="UniProtKB-KW"/>
</dbReference>
<dbReference type="GO" id="GO:0051301">
    <property type="term" value="P:cell division"/>
    <property type="evidence" value="ECO:0007669"/>
    <property type="project" value="UniProtKB-KW"/>
</dbReference>
<dbReference type="GO" id="GO:1904667">
    <property type="term" value="P:negative regulation of ubiquitin protein ligase activity"/>
    <property type="evidence" value="ECO:0000250"/>
    <property type="project" value="UniProtKB"/>
</dbReference>
<dbReference type="GO" id="GO:0016579">
    <property type="term" value="P:protein deubiquitination"/>
    <property type="evidence" value="ECO:0000250"/>
    <property type="project" value="UniProtKB"/>
</dbReference>
<dbReference type="GO" id="GO:0006508">
    <property type="term" value="P:proteolysis"/>
    <property type="evidence" value="ECO:0007669"/>
    <property type="project" value="UniProtKB-KW"/>
</dbReference>
<dbReference type="FunFam" id="3.30.40.10:FF:000067">
    <property type="entry name" value="Ubiquitinyl hydrolase 1"/>
    <property type="match status" value="1"/>
</dbReference>
<dbReference type="Gene3D" id="3.90.70.10">
    <property type="entry name" value="Cysteine proteinases"/>
    <property type="match status" value="1"/>
</dbReference>
<dbReference type="Gene3D" id="3.30.40.10">
    <property type="entry name" value="Zinc/RING finger domain, C3HC4 (zinc finger)"/>
    <property type="match status" value="1"/>
</dbReference>
<dbReference type="InterPro" id="IPR038765">
    <property type="entry name" value="Papain-like_cys_pep_sf"/>
</dbReference>
<dbReference type="InterPro" id="IPR001394">
    <property type="entry name" value="Peptidase_C19_UCH"/>
</dbReference>
<dbReference type="InterPro" id="IPR050185">
    <property type="entry name" value="Ub_carboxyl-term_hydrolase"/>
</dbReference>
<dbReference type="InterPro" id="IPR018200">
    <property type="entry name" value="USP_CS"/>
</dbReference>
<dbReference type="InterPro" id="IPR028889">
    <property type="entry name" value="USP_dom"/>
</dbReference>
<dbReference type="InterPro" id="IPR013083">
    <property type="entry name" value="Znf_RING/FYVE/PHD"/>
</dbReference>
<dbReference type="InterPro" id="IPR001607">
    <property type="entry name" value="Znf_UBP"/>
</dbReference>
<dbReference type="PANTHER" id="PTHR21646">
    <property type="entry name" value="UBIQUITIN CARBOXYL-TERMINAL HYDROLASE"/>
    <property type="match status" value="1"/>
</dbReference>
<dbReference type="PANTHER" id="PTHR21646:SF15">
    <property type="entry name" value="UBIQUITIN CARBOXYL-TERMINAL HYDROLASE 44"/>
    <property type="match status" value="1"/>
</dbReference>
<dbReference type="Pfam" id="PF00443">
    <property type="entry name" value="UCH"/>
    <property type="match status" value="1"/>
</dbReference>
<dbReference type="Pfam" id="PF02148">
    <property type="entry name" value="zf-UBP"/>
    <property type="match status" value="1"/>
</dbReference>
<dbReference type="SMART" id="SM00290">
    <property type="entry name" value="ZnF_UBP"/>
    <property type="match status" value="1"/>
</dbReference>
<dbReference type="SUPFAM" id="SSF54001">
    <property type="entry name" value="Cysteine proteinases"/>
    <property type="match status" value="1"/>
</dbReference>
<dbReference type="SUPFAM" id="SSF57850">
    <property type="entry name" value="RING/U-box"/>
    <property type="match status" value="1"/>
</dbReference>
<dbReference type="PROSITE" id="PS00972">
    <property type="entry name" value="USP_1"/>
    <property type="match status" value="1"/>
</dbReference>
<dbReference type="PROSITE" id="PS00973">
    <property type="entry name" value="USP_2"/>
    <property type="match status" value="1"/>
</dbReference>
<dbReference type="PROSITE" id="PS50235">
    <property type="entry name" value="USP_3"/>
    <property type="match status" value="1"/>
</dbReference>
<dbReference type="PROSITE" id="PS50271">
    <property type="entry name" value="ZF_UBP"/>
    <property type="match status" value="1"/>
</dbReference>
<keyword id="KW-0131">Cell cycle</keyword>
<keyword id="KW-0132">Cell division</keyword>
<keyword id="KW-0378">Hydrolase</keyword>
<keyword id="KW-0479">Metal-binding</keyword>
<keyword id="KW-0498">Mitosis</keyword>
<keyword id="KW-0539">Nucleus</keyword>
<keyword id="KW-0645">Protease</keyword>
<keyword id="KW-1185">Reference proteome</keyword>
<keyword id="KW-0788">Thiol protease</keyword>
<keyword id="KW-0833">Ubl conjugation pathway</keyword>
<keyword id="KW-0862">Zinc</keyword>
<keyword id="KW-0863">Zinc-finger</keyword>
<organism>
    <name type="scientific">Xenopus tropicalis</name>
    <name type="common">Western clawed frog</name>
    <name type="synonym">Silurana tropicalis</name>
    <dbReference type="NCBI Taxonomy" id="8364"/>
    <lineage>
        <taxon>Eukaryota</taxon>
        <taxon>Metazoa</taxon>
        <taxon>Chordata</taxon>
        <taxon>Craniata</taxon>
        <taxon>Vertebrata</taxon>
        <taxon>Euteleostomi</taxon>
        <taxon>Amphibia</taxon>
        <taxon>Batrachia</taxon>
        <taxon>Anura</taxon>
        <taxon>Pipoidea</taxon>
        <taxon>Pipidae</taxon>
        <taxon>Xenopodinae</taxon>
        <taxon>Xenopus</taxon>
        <taxon>Silurana</taxon>
    </lineage>
</organism>
<feature type="chain" id="PRO_0000395815" description="Ubiquitin carboxyl-terminal hydrolase 44">
    <location>
        <begin position="1"/>
        <end position="652"/>
    </location>
</feature>
<feature type="domain" description="USP">
    <location>
        <begin position="274"/>
        <end position="652"/>
    </location>
</feature>
<feature type="zinc finger region" description="UBP-type" evidence="2">
    <location>
        <begin position="2"/>
        <end position="99"/>
    </location>
</feature>
<feature type="region of interest" description="Disordered" evidence="5">
    <location>
        <begin position="184"/>
        <end position="230"/>
    </location>
</feature>
<feature type="active site" description="Nucleophile" evidence="3 4">
    <location>
        <position position="283"/>
    </location>
</feature>
<feature type="active site" description="Proton acceptor" evidence="3 4">
    <location>
        <position position="639"/>
    </location>
</feature>
<feature type="binding site" evidence="2">
    <location>
        <position position="4"/>
    </location>
    <ligand>
        <name>Zn(2+)</name>
        <dbReference type="ChEBI" id="CHEBI:29105"/>
        <label>1</label>
    </ligand>
</feature>
<feature type="binding site" evidence="2">
    <location>
        <position position="6"/>
    </location>
    <ligand>
        <name>Zn(2+)</name>
        <dbReference type="ChEBI" id="CHEBI:29105"/>
        <label>1</label>
    </ligand>
</feature>
<feature type="binding site" evidence="2">
    <location>
        <position position="26"/>
    </location>
    <ligand>
        <name>Zn(2+)</name>
        <dbReference type="ChEBI" id="CHEBI:29105"/>
        <label>2</label>
    </ligand>
</feature>
<feature type="binding site" evidence="2">
    <location>
        <position position="29"/>
    </location>
    <ligand>
        <name>Zn(2+)</name>
        <dbReference type="ChEBI" id="CHEBI:29105"/>
        <label>2</label>
    </ligand>
</feature>
<feature type="binding site" evidence="2">
    <location>
        <position position="38"/>
    </location>
    <ligand>
        <name>Zn(2+)</name>
        <dbReference type="ChEBI" id="CHEBI:29105"/>
        <label>3</label>
    </ligand>
</feature>
<feature type="binding site" evidence="2">
    <location>
        <position position="41"/>
    </location>
    <ligand>
        <name>Zn(2+)</name>
        <dbReference type="ChEBI" id="CHEBI:29105"/>
        <label>3</label>
    </ligand>
</feature>
<feature type="binding site" evidence="2">
    <location>
        <position position="46"/>
    </location>
    <ligand>
        <name>Zn(2+)</name>
        <dbReference type="ChEBI" id="CHEBI:29105"/>
        <label>2</label>
    </ligand>
</feature>
<feature type="binding site" evidence="2">
    <location>
        <position position="53"/>
    </location>
    <ligand>
        <name>Zn(2+)</name>
        <dbReference type="ChEBI" id="CHEBI:29105"/>
        <label>2</label>
    </ligand>
</feature>
<feature type="binding site" evidence="2">
    <location>
        <position position="57"/>
    </location>
    <ligand>
        <name>Zn(2+)</name>
        <dbReference type="ChEBI" id="CHEBI:29105"/>
        <label>3</label>
    </ligand>
</feature>
<feature type="binding site" evidence="2">
    <location>
        <position position="63"/>
    </location>
    <ligand>
        <name>Zn(2+)</name>
        <dbReference type="ChEBI" id="CHEBI:29105"/>
        <label>3</label>
    </ligand>
</feature>
<feature type="binding site" evidence="2">
    <location>
        <position position="76"/>
    </location>
    <ligand>
        <name>Zn(2+)</name>
        <dbReference type="ChEBI" id="CHEBI:29105"/>
        <label>1</label>
    </ligand>
</feature>
<feature type="binding site" evidence="2">
    <location>
        <position position="79"/>
    </location>
    <ligand>
        <name>Zn(2+)</name>
        <dbReference type="ChEBI" id="CHEBI:29105"/>
        <label>1</label>
    </ligand>
</feature>
<comment type="function">
    <text evidence="1">Deubiquitinase that plays a key role in the spindle checkpoint by preventing premature anaphase onset. Acts by specifically mediating deubiquitination of cdc20, a negative regulator of the anaphase promoting complex/cyclosome (APC/C) (By similarity).</text>
</comment>
<comment type="catalytic activity">
    <reaction>
        <text>Thiol-dependent hydrolysis of ester, thioester, amide, peptide and isopeptide bonds formed by the C-terminal Gly of ubiquitin (a 76-residue protein attached to proteins as an intracellular targeting signal).</text>
        <dbReference type="EC" id="3.4.19.12"/>
    </reaction>
</comment>
<comment type="subcellular location">
    <subcellularLocation>
        <location evidence="1">Nucleus</location>
    </subcellularLocation>
</comment>
<comment type="similarity">
    <text evidence="6">Belongs to the peptidase C19 family. USP44 subfamily.</text>
</comment>
<evidence type="ECO:0000250" key="1"/>
<evidence type="ECO:0000255" key="2">
    <source>
        <dbReference type="PROSITE-ProRule" id="PRU00502"/>
    </source>
</evidence>
<evidence type="ECO:0000255" key="3">
    <source>
        <dbReference type="PROSITE-ProRule" id="PRU10092"/>
    </source>
</evidence>
<evidence type="ECO:0000255" key="4">
    <source>
        <dbReference type="PROSITE-ProRule" id="PRU10093"/>
    </source>
</evidence>
<evidence type="ECO:0000256" key="5">
    <source>
        <dbReference type="SAM" id="MobiDB-lite"/>
    </source>
</evidence>
<evidence type="ECO:0000305" key="6"/>
<accession>Q0V9G5</accession>
<protein>
    <recommendedName>
        <fullName>Ubiquitin carboxyl-terminal hydrolase 44</fullName>
        <ecNumber>3.4.19.12</ecNumber>
    </recommendedName>
    <alternativeName>
        <fullName>Deubiquitinating enzyme 44</fullName>
    </alternativeName>
    <alternativeName>
        <fullName>Ubiquitin thioesterase 44</fullName>
    </alternativeName>
    <alternativeName>
        <fullName>Ubiquitin-specific-processing protease 44</fullName>
    </alternativeName>
</protein>